<sequence>MNGVINIYKNTGMTSFDVVAMVRRVAKMKKVGHTGTLDPAASGVLPVCLGKATKIIDYIMENKKVYRVNLKLGMVTDTYDLEGEVLREEDASHITKDEILNCINSFVGTIDQVPPMYSALKQNGVRLYELARQGIEVHREARKITIYSIENIKIESNDNIQMDVCCSKGTYIRSLCYDIGEKLNVGATMTALERIQNGTFTKEEAINIEDLTEELLEKHIISIEKALDSFEKITVNEKFGKLLRNGVKVFDNRMYSEEVEFNKLYRVYEDNGVFLGLGKRDEKGFKLEKLLIEE</sequence>
<name>TRUB_CLOPE</name>
<comment type="function">
    <text evidence="1">Responsible for synthesis of pseudouridine from uracil-55 in the psi GC loop of transfer RNAs.</text>
</comment>
<comment type="catalytic activity">
    <reaction evidence="1">
        <text>uridine(55) in tRNA = pseudouridine(55) in tRNA</text>
        <dbReference type="Rhea" id="RHEA:42532"/>
        <dbReference type="Rhea" id="RHEA-COMP:10101"/>
        <dbReference type="Rhea" id="RHEA-COMP:10102"/>
        <dbReference type="ChEBI" id="CHEBI:65314"/>
        <dbReference type="ChEBI" id="CHEBI:65315"/>
        <dbReference type="EC" id="5.4.99.25"/>
    </reaction>
</comment>
<comment type="similarity">
    <text evidence="1">Belongs to the pseudouridine synthase TruB family. Type 1 subfamily.</text>
</comment>
<accession>Q8XJS1</accession>
<evidence type="ECO:0000255" key="1">
    <source>
        <dbReference type="HAMAP-Rule" id="MF_01080"/>
    </source>
</evidence>
<reference key="1">
    <citation type="journal article" date="2002" name="Proc. Natl. Acad. Sci. U.S.A.">
        <title>Complete genome sequence of Clostridium perfringens, an anaerobic flesh-eater.</title>
        <authorList>
            <person name="Shimizu T."/>
            <person name="Ohtani K."/>
            <person name="Hirakawa H."/>
            <person name="Ohshima K."/>
            <person name="Yamashita A."/>
            <person name="Shiba T."/>
            <person name="Ogasawara N."/>
            <person name="Hattori M."/>
            <person name="Kuhara S."/>
            <person name="Hayashi H."/>
        </authorList>
    </citation>
    <scope>NUCLEOTIDE SEQUENCE [LARGE SCALE GENOMIC DNA]</scope>
    <source>
        <strain>13 / Type A</strain>
    </source>
</reference>
<dbReference type="EC" id="5.4.99.25" evidence="1"/>
<dbReference type="EMBL" id="BA000016">
    <property type="protein sequence ID" value="BAB81389.1"/>
    <property type="molecule type" value="Genomic_DNA"/>
</dbReference>
<dbReference type="RefSeq" id="WP_003469131.1">
    <property type="nucleotide sequence ID" value="NC_003366.1"/>
</dbReference>
<dbReference type="SMR" id="Q8XJS1"/>
<dbReference type="STRING" id="195102.gene:10490947"/>
<dbReference type="KEGG" id="cpe:CPE1683"/>
<dbReference type="HOGENOM" id="CLU_032087_0_1_9"/>
<dbReference type="Proteomes" id="UP000000818">
    <property type="component" value="Chromosome"/>
</dbReference>
<dbReference type="GO" id="GO:0003723">
    <property type="term" value="F:RNA binding"/>
    <property type="evidence" value="ECO:0007669"/>
    <property type="project" value="InterPro"/>
</dbReference>
<dbReference type="GO" id="GO:0160148">
    <property type="term" value="F:tRNA pseudouridine(55) synthase activity"/>
    <property type="evidence" value="ECO:0007669"/>
    <property type="project" value="UniProtKB-EC"/>
</dbReference>
<dbReference type="GO" id="GO:1990481">
    <property type="term" value="P:mRNA pseudouridine synthesis"/>
    <property type="evidence" value="ECO:0007669"/>
    <property type="project" value="TreeGrafter"/>
</dbReference>
<dbReference type="GO" id="GO:0031119">
    <property type="term" value="P:tRNA pseudouridine synthesis"/>
    <property type="evidence" value="ECO:0007669"/>
    <property type="project" value="UniProtKB-UniRule"/>
</dbReference>
<dbReference type="CDD" id="cd02573">
    <property type="entry name" value="PseudoU_synth_EcTruB"/>
    <property type="match status" value="1"/>
</dbReference>
<dbReference type="FunFam" id="3.30.2350.10:FF:000011">
    <property type="entry name" value="tRNA pseudouridine synthase B"/>
    <property type="match status" value="1"/>
</dbReference>
<dbReference type="Gene3D" id="3.30.2350.10">
    <property type="entry name" value="Pseudouridine synthase"/>
    <property type="match status" value="1"/>
</dbReference>
<dbReference type="HAMAP" id="MF_01080">
    <property type="entry name" value="TruB_bact"/>
    <property type="match status" value="1"/>
</dbReference>
<dbReference type="InterPro" id="IPR020103">
    <property type="entry name" value="PsdUridine_synth_cat_dom_sf"/>
</dbReference>
<dbReference type="InterPro" id="IPR002501">
    <property type="entry name" value="PsdUridine_synth_N"/>
</dbReference>
<dbReference type="InterPro" id="IPR014780">
    <property type="entry name" value="tRNA_psdUridine_synth_TruB"/>
</dbReference>
<dbReference type="InterPro" id="IPR032819">
    <property type="entry name" value="TruB_C"/>
</dbReference>
<dbReference type="NCBIfam" id="TIGR00431">
    <property type="entry name" value="TruB"/>
    <property type="match status" value="1"/>
</dbReference>
<dbReference type="PANTHER" id="PTHR13767:SF2">
    <property type="entry name" value="PSEUDOURIDYLATE SYNTHASE TRUB1"/>
    <property type="match status" value="1"/>
</dbReference>
<dbReference type="PANTHER" id="PTHR13767">
    <property type="entry name" value="TRNA-PSEUDOURIDINE SYNTHASE"/>
    <property type="match status" value="1"/>
</dbReference>
<dbReference type="Pfam" id="PF16198">
    <property type="entry name" value="TruB_C_2"/>
    <property type="match status" value="1"/>
</dbReference>
<dbReference type="Pfam" id="PF01509">
    <property type="entry name" value="TruB_N"/>
    <property type="match status" value="1"/>
</dbReference>
<dbReference type="SUPFAM" id="SSF55120">
    <property type="entry name" value="Pseudouridine synthase"/>
    <property type="match status" value="1"/>
</dbReference>
<protein>
    <recommendedName>
        <fullName evidence="1">tRNA pseudouridine synthase B</fullName>
        <ecNumber evidence="1">5.4.99.25</ecNumber>
    </recommendedName>
    <alternativeName>
        <fullName evidence="1">tRNA pseudouridine(55) synthase</fullName>
        <shortName evidence="1">Psi55 synthase</shortName>
    </alternativeName>
    <alternativeName>
        <fullName evidence="1">tRNA pseudouridylate synthase</fullName>
    </alternativeName>
    <alternativeName>
        <fullName evidence="1">tRNA-uridine isomerase</fullName>
    </alternativeName>
</protein>
<feature type="chain" id="PRO_0000121821" description="tRNA pseudouridine synthase B">
    <location>
        <begin position="1"/>
        <end position="294"/>
    </location>
</feature>
<feature type="active site" description="Nucleophile" evidence="1">
    <location>
        <position position="38"/>
    </location>
</feature>
<proteinExistence type="inferred from homology"/>
<keyword id="KW-0413">Isomerase</keyword>
<keyword id="KW-1185">Reference proteome</keyword>
<keyword id="KW-0819">tRNA processing</keyword>
<organism>
    <name type="scientific">Clostridium perfringens (strain 13 / Type A)</name>
    <dbReference type="NCBI Taxonomy" id="195102"/>
    <lineage>
        <taxon>Bacteria</taxon>
        <taxon>Bacillati</taxon>
        <taxon>Bacillota</taxon>
        <taxon>Clostridia</taxon>
        <taxon>Eubacteriales</taxon>
        <taxon>Clostridiaceae</taxon>
        <taxon>Clostridium</taxon>
    </lineage>
</organism>
<gene>
    <name evidence="1" type="primary">truB</name>
    <name type="ordered locus">CPE1683</name>
</gene>